<comment type="function">
    <text evidence="2 4">Has an essential role in the assembly and organization of the sperm flagellar axoneme (PubMed:32791035). Required for the elongation of the primary cilium and sperm flagellar midpiece via modulation of the Notch signaling pathway (By similarity).</text>
</comment>
<comment type="subunit">
    <text evidence="2">Interacts with ODFP2.</text>
</comment>
<comment type="interaction">
    <interactant intactId="EBI-10245749">
        <id>Q5T655</id>
    </interactant>
    <interactant intactId="EBI-1642333">
        <id>Q9BYV9</id>
        <label>BACH2</label>
    </interactant>
    <organismsDiffer>false</organismsDiffer>
    <experiments>3</experiments>
</comment>
<comment type="interaction">
    <interactant intactId="EBI-10245749">
        <id>Q5T655</id>
    </interactant>
    <interactant intactId="EBI-3044087">
        <id>Q7Z3Y8</id>
        <label>KRT27</label>
    </interactant>
    <organismsDiffer>false</organismsDiffer>
    <experiments>3</experiments>
</comment>
<comment type="interaction">
    <interactant intactId="EBI-10245749">
        <id>Q5T655</id>
    </interactant>
    <interactant intactId="EBI-307531">
        <id>P23508</id>
        <label>MCC</label>
    </interactant>
    <organismsDiffer>false</organismsDiffer>
    <experiments>3</experiments>
</comment>
<comment type="interaction">
    <interactant intactId="EBI-10245749">
        <id>Q5T655</id>
    </interactant>
    <interactant intactId="EBI-741200">
        <id>Q8IVL1</id>
        <label>NAV2</label>
    </interactant>
    <organismsDiffer>false</organismsDiffer>
    <experiments>3</experiments>
</comment>
<comment type="interaction">
    <interactant intactId="EBI-10245749">
        <id>Q5T655</id>
    </interactant>
    <interactant intactId="EBI-10226430">
        <id>Q0D2K3</id>
        <label>RIPPLY1</label>
    </interactant>
    <organismsDiffer>false</organismsDiffer>
    <experiments>3</experiments>
</comment>
<comment type="subcellular location">
    <subcellularLocation>
        <location evidence="1">Cell projection</location>
        <location evidence="1">Cilium</location>
    </subcellularLocation>
    <subcellularLocation>
        <location evidence="4 5">Cell projection</location>
        <location evidence="4 5">Cilium</location>
        <location evidence="4 5">Flagellum</location>
    </subcellularLocation>
    <subcellularLocation>
        <location evidence="2">Cytoplasm</location>
        <location evidence="2">Cytoskeleton</location>
        <location evidence="2">Microtubule organizing center</location>
        <location evidence="2">Centrosome</location>
    </subcellularLocation>
    <text evidence="2 4">Localized to the entire flagellum and predominantly concentrated in the midpiece. Co-localizes with ODFP2 at the centrosome (By similarity).</text>
</comment>
<comment type="disease" evidence="4 5">
    <disease id="DI-05976">
        <name>Spermatogenic failure 49</name>
        <acronym>SPGF49</acronym>
        <description>An autosomal recessive infertility disorder characterized by asthenoteratozoospermia and multiple morphologic abnormalities of the sperm flagella, primarily coiled and short flagella, with markedly reduced or absent motility.</description>
        <dbReference type="MIM" id="619144"/>
    </disease>
    <text>The disease is caused by variants affecting the gene represented in this entry.</text>
</comment>
<comment type="similarity">
    <text evidence="6">Belongs to the CFAP58 family.</text>
</comment>
<reference key="1">
    <citation type="journal article" date="2004" name="Nature">
        <title>The DNA sequence and comparative analysis of human chromosome 10.</title>
        <authorList>
            <person name="Deloukas P."/>
            <person name="Earthrowl M.E."/>
            <person name="Grafham D.V."/>
            <person name="Rubenfield M."/>
            <person name="French L."/>
            <person name="Steward C.A."/>
            <person name="Sims S.K."/>
            <person name="Jones M.C."/>
            <person name="Searle S."/>
            <person name="Scott C."/>
            <person name="Howe K."/>
            <person name="Hunt S.E."/>
            <person name="Andrews T.D."/>
            <person name="Gilbert J.G.R."/>
            <person name="Swarbreck D."/>
            <person name="Ashurst J.L."/>
            <person name="Taylor A."/>
            <person name="Battles J."/>
            <person name="Bird C.P."/>
            <person name="Ainscough R."/>
            <person name="Almeida J.P."/>
            <person name="Ashwell R.I.S."/>
            <person name="Ambrose K.D."/>
            <person name="Babbage A.K."/>
            <person name="Bagguley C.L."/>
            <person name="Bailey J."/>
            <person name="Banerjee R."/>
            <person name="Bates K."/>
            <person name="Beasley H."/>
            <person name="Bray-Allen S."/>
            <person name="Brown A.J."/>
            <person name="Brown J.Y."/>
            <person name="Burford D.C."/>
            <person name="Burrill W."/>
            <person name="Burton J."/>
            <person name="Cahill P."/>
            <person name="Camire D."/>
            <person name="Carter N.P."/>
            <person name="Chapman J.C."/>
            <person name="Clark S.Y."/>
            <person name="Clarke G."/>
            <person name="Clee C.M."/>
            <person name="Clegg S."/>
            <person name="Corby N."/>
            <person name="Coulson A."/>
            <person name="Dhami P."/>
            <person name="Dutta I."/>
            <person name="Dunn M."/>
            <person name="Faulkner L."/>
            <person name="Frankish A."/>
            <person name="Frankland J.A."/>
            <person name="Garner P."/>
            <person name="Garnett J."/>
            <person name="Gribble S."/>
            <person name="Griffiths C."/>
            <person name="Grocock R."/>
            <person name="Gustafson E."/>
            <person name="Hammond S."/>
            <person name="Harley J.L."/>
            <person name="Hart E."/>
            <person name="Heath P.D."/>
            <person name="Ho T.P."/>
            <person name="Hopkins B."/>
            <person name="Horne J."/>
            <person name="Howden P.J."/>
            <person name="Huckle E."/>
            <person name="Hynds C."/>
            <person name="Johnson C."/>
            <person name="Johnson D."/>
            <person name="Kana A."/>
            <person name="Kay M."/>
            <person name="Kimberley A.M."/>
            <person name="Kershaw J.K."/>
            <person name="Kokkinaki M."/>
            <person name="Laird G.K."/>
            <person name="Lawlor S."/>
            <person name="Lee H.M."/>
            <person name="Leongamornlert D.A."/>
            <person name="Laird G."/>
            <person name="Lloyd C."/>
            <person name="Lloyd D.M."/>
            <person name="Loveland J."/>
            <person name="Lovell J."/>
            <person name="McLaren S."/>
            <person name="McLay K.E."/>
            <person name="McMurray A."/>
            <person name="Mashreghi-Mohammadi M."/>
            <person name="Matthews L."/>
            <person name="Milne S."/>
            <person name="Nickerson T."/>
            <person name="Nguyen M."/>
            <person name="Overton-Larty E."/>
            <person name="Palmer S.A."/>
            <person name="Pearce A.V."/>
            <person name="Peck A.I."/>
            <person name="Pelan S."/>
            <person name="Phillimore B."/>
            <person name="Porter K."/>
            <person name="Rice C.M."/>
            <person name="Rogosin A."/>
            <person name="Ross M.T."/>
            <person name="Sarafidou T."/>
            <person name="Sehra H.K."/>
            <person name="Shownkeen R."/>
            <person name="Skuce C.D."/>
            <person name="Smith M."/>
            <person name="Standring L."/>
            <person name="Sycamore N."/>
            <person name="Tester J."/>
            <person name="Thorpe A."/>
            <person name="Torcasso W."/>
            <person name="Tracey A."/>
            <person name="Tromans A."/>
            <person name="Tsolas J."/>
            <person name="Wall M."/>
            <person name="Walsh J."/>
            <person name="Wang H."/>
            <person name="Weinstock K."/>
            <person name="West A.P."/>
            <person name="Willey D.L."/>
            <person name="Whitehead S.L."/>
            <person name="Wilming L."/>
            <person name="Wray P.W."/>
            <person name="Young L."/>
            <person name="Chen Y."/>
            <person name="Lovering R.C."/>
            <person name="Moschonas N.K."/>
            <person name="Siebert R."/>
            <person name="Fechtel K."/>
            <person name="Bentley D."/>
            <person name="Durbin R.M."/>
            <person name="Hubbard T."/>
            <person name="Doucette-Stamm L."/>
            <person name="Beck S."/>
            <person name="Smith D.R."/>
            <person name="Rogers J."/>
        </authorList>
    </citation>
    <scope>NUCLEOTIDE SEQUENCE [LARGE SCALE GENOMIC DNA]</scope>
</reference>
<reference key="2">
    <citation type="submission" date="2005-09" db="EMBL/GenBank/DDBJ databases">
        <authorList>
            <person name="Mural R.J."/>
            <person name="Istrail S."/>
            <person name="Sutton G.G."/>
            <person name="Florea L."/>
            <person name="Halpern A.L."/>
            <person name="Mobarry C.M."/>
            <person name="Lippert R."/>
            <person name="Walenz B."/>
            <person name="Shatkay H."/>
            <person name="Dew I."/>
            <person name="Miller J.R."/>
            <person name="Flanigan M.J."/>
            <person name="Edwards N.J."/>
            <person name="Bolanos R."/>
            <person name="Fasulo D."/>
            <person name="Halldorsson B.V."/>
            <person name="Hannenhalli S."/>
            <person name="Turner R."/>
            <person name="Yooseph S."/>
            <person name="Lu F."/>
            <person name="Nusskern D.R."/>
            <person name="Shue B.C."/>
            <person name="Zheng X.H."/>
            <person name="Zhong F."/>
            <person name="Delcher A.L."/>
            <person name="Huson D.H."/>
            <person name="Kravitz S.A."/>
            <person name="Mouchard L."/>
            <person name="Reinert K."/>
            <person name="Remington K.A."/>
            <person name="Clark A.G."/>
            <person name="Waterman M.S."/>
            <person name="Eichler E.E."/>
            <person name="Adams M.D."/>
            <person name="Hunkapiller M.W."/>
            <person name="Myers E.W."/>
            <person name="Venter J.C."/>
        </authorList>
    </citation>
    <scope>NUCLEOTIDE SEQUENCE [LARGE SCALE GENOMIC DNA]</scope>
</reference>
<reference key="3">
    <citation type="journal article" date="2004" name="Genome Res.">
        <title>The status, quality, and expansion of the NIH full-length cDNA project: the Mammalian Gene Collection (MGC).</title>
        <authorList>
            <consortium name="The MGC Project Team"/>
        </authorList>
    </citation>
    <scope>NUCLEOTIDE SEQUENCE [LARGE SCALE MRNA]</scope>
    <source>
        <tissue>Testis</tissue>
    </source>
</reference>
<reference key="4">
    <citation type="journal article" date="2004" name="Nat. Genet.">
        <title>Complete sequencing and characterization of 21,243 full-length human cDNAs.</title>
        <authorList>
            <person name="Ota T."/>
            <person name="Suzuki Y."/>
            <person name="Nishikawa T."/>
            <person name="Otsuki T."/>
            <person name="Sugiyama T."/>
            <person name="Irie R."/>
            <person name="Wakamatsu A."/>
            <person name="Hayashi K."/>
            <person name="Sato H."/>
            <person name="Nagai K."/>
            <person name="Kimura K."/>
            <person name="Makita H."/>
            <person name="Sekine M."/>
            <person name="Obayashi M."/>
            <person name="Nishi T."/>
            <person name="Shibahara T."/>
            <person name="Tanaka T."/>
            <person name="Ishii S."/>
            <person name="Yamamoto J."/>
            <person name="Saito K."/>
            <person name="Kawai Y."/>
            <person name="Isono Y."/>
            <person name="Nakamura Y."/>
            <person name="Nagahari K."/>
            <person name="Murakami K."/>
            <person name="Yasuda T."/>
            <person name="Iwayanagi T."/>
            <person name="Wagatsuma M."/>
            <person name="Shiratori A."/>
            <person name="Sudo H."/>
            <person name="Hosoiri T."/>
            <person name="Kaku Y."/>
            <person name="Kodaira H."/>
            <person name="Kondo H."/>
            <person name="Sugawara M."/>
            <person name="Takahashi M."/>
            <person name="Kanda K."/>
            <person name="Yokoi T."/>
            <person name="Furuya T."/>
            <person name="Kikkawa E."/>
            <person name="Omura Y."/>
            <person name="Abe K."/>
            <person name="Kamihara K."/>
            <person name="Katsuta N."/>
            <person name="Sato K."/>
            <person name="Tanikawa M."/>
            <person name="Yamazaki M."/>
            <person name="Ninomiya K."/>
            <person name="Ishibashi T."/>
            <person name="Yamashita H."/>
            <person name="Murakawa K."/>
            <person name="Fujimori K."/>
            <person name="Tanai H."/>
            <person name="Kimata M."/>
            <person name="Watanabe M."/>
            <person name="Hiraoka S."/>
            <person name="Chiba Y."/>
            <person name="Ishida S."/>
            <person name="Ono Y."/>
            <person name="Takiguchi S."/>
            <person name="Watanabe S."/>
            <person name="Yosida M."/>
            <person name="Hotuta T."/>
            <person name="Kusano J."/>
            <person name="Kanehori K."/>
            <person name="Takahashi-Fujii A."/>
            <person name="Hara H."/>
            <person name="Tanase T.-O."/>
            <person name="Nomura Y."/>
            <person name="Togiya S."/>
            <person name="Komai F."/>
            <person name="Hara R."/>
            <person name="Takeuchi K."/>
            <person name="Arita M."/>
            <person name="Imose N."/>
            <person name="Musashino K."/>
            <person name="Yuuki H."/>
            <person name="Oshima A."/>
            <person name="Sasaki N."/>
            <person name="Aotsuka S."/>
            <person name="Yoshikawa Y."/>
            <person name="Matsunawa H."/>
            <person name="Ichihara T."/>
            <person name="Shiohata N."/>
            <person name="Sano S."/>
            <person name="Moriya S."/>
            <person name="Momiyama H."/>
            <person name="Satoh N."/>
            <person name="Takami S."/>
            <person name="Terashima Y."/>
            <person name="Suzuki O."/>
            <person name="Nakagawa S."/>
            <person name="Senoh A."/>
            <person name="Mizoguchi H."/>
            <person name="Goto Y."/>
            <person name="Shimizu F."/>
            <person name="Wakebe H."/>
            <person name="Hishigaki H."/>
            <person name="Watanabe T."/>
            <person name="Sugiyama A."/>
            <person name="Takemoto M."/>
            <person name="Kawakami B."/>
            <person name="Yamazaki M."/>
            <person name="Watanabe K."/>
            <person name="Kumagai A."/>
            <person name="Itakura S."/>
            <person name="Fukuzumi Y."/>
            <person name="Fujimori Y."/>
            <person name="Komiyama M."/>
            <person name="Tashiro H."/>
            <person name="Tanigami A."/>
            <person name="Fujiwara T."/>
            <person name="Ono T."/>
            <person name="Yamada K."/>
            <person name="Fujii Y."/>
            <person name="Ozaki K."/>
            <person name="Hirao M."/>
            <person name="Ohmori Y."/>
            <person name="Kawabata A."/>
            <person name="Hikiji T."/>
            <person name="Kobatake N."/>
            <person name="Inagaki H."/>
            <person name="Ikema Y."/>
            <person name="Okamoto S."/>
            <person name="Okitani R."/>
            <person name="Kawakami T."/>
            <person name="Noguchi S."/>
            <person name="Itoh T."/>
            <person name="Shigeta K."/>
            <person name="Senba T."/>
            <person name="Matsumura K."/>
            <person name="Nakajima Y."/>
            <person name="Mizuno T."/>
            <person name="Morinaga M."/>
            <person name="Sasaki M."/>
            <person name="Togashi T."/>
            <person name="Oyama M."/>
            <person name="Hata H."/>
            <person name="Watanabe M."/>
            <person name="Komatsu T."/>
            <person name="Mizushima-Sugano J."/>
            <person name="Satoh T."/>
            <person name="Shirai Y."/>
            <person name="Takahashi Y."/>
            <person name="Nakagawa K."/>
            <person name="Okumura K."/>
            <person name="Nagase T."/>
            <person name="Nomura N."/>
            <person name="Kikuchi H."/>
            <person name="Masuho Y."/>
            <person name="Yamashita R."/>
            <person name="Nakai K."/>
            <person name="Yada T."/>
            <person name="Nakamura Y."/>
            <person name="Ohara O."/>
            <person name="Isogai T."/>
            <person name="Sugano S."/>
        </authorList>
    </citation>
    <scope>NUCLEOTIDE SEQUENCE [LARGE SCALE MRNA] OF 1-550</scope>
    <source>
        <tissue>Testis</tissue>
    </source>
</reference>
<reference key="5">
    <citation type="journal article" date="2020" name="Am. J. Hum. Genet.">
        <title>Bi-allelic loss-of-function variants in CFAP58 cause flagellar axoneme and mitochondrial sheath defects and asthenoteratozoospermia in humans and mice.</title>
        <authorList>
            <person name="He X."/>
            <person name="Liu C."/>
            <person name="Yang X."/>
            <person name="Lv M."/>
            <person name="Ni X."/>
            <person name="Li Q."/>
            <person name="Cheng H."/>
            <person name="Liu W."/>
            <person name="Tian S."/>
            <person name="Wu H."/>
            <person name="Gao Y."/>
            <person name="Yang C."/>
            <person name="Tan Q."/>
            <person name="Cong J."/>
            <person name="Tang D."/>
            <person name="Zhang J."/>
            <person name="Song B."/>
            <person name="Zhong Y."/>
            <person name="Li H."/>
            <person name="Zhi W."/>
            <person name="Mao X."/>
            <person name="Fu F."/>
            <person name="Ge L."/>
            <person name="Shen Q."/>
            <person name="Zhang M."/>
            <person name="Saiyin H."/>
            <person name="Jin L."/>
            <person name="Xu Y."/>
            <person name="Zhou P."/>
            <person name="Wei Z."/>
            <person name="Zhang F."/>
            <person name="Cao Y."/>
        </authorList>
    </citation>
    <scope>FUNCTION</scope>
    <scope>SUBCELLULAR LOCATION</scope>
    <scope>INVOLVEMENT IN SPGF49</scope>
    <scope>VARIANTS SPGF49 566-GLN--PHE-872 DEL; 698-ARG--PHE-872 DEL AND 758-TYR--PHE-872 DEL</scope>
    <scope>CHARACTERIZATION OF VARIANTS SPGF49 698-ARG--PHE-872 DEL AND 758-TYR--PHE-872 DEL</scope>
</reference>
<reference key="6">
    <citation type="journal article" date="2021" name="Clin. Genet.">
        <title>Biallelic mutations of CFAP58 are associated with multiple morphological abnormalities of the sperm flagella.</title>
        <authorList>
            <person name="Sha Y."/>
            <person name="Sha Y."/>
            <person name="Liu W."/>
            <person name="Zhu X."/>
            <person name="Weng M."/>
            <person name="Zhang X."/>
            <person name="Wang Y."/>
            <person name="Zhou H."/>
        </authorList>
    </citation>
    <scope>VARIANTS SPGF49 LEU-108; TRP-619; CYS-628 AND SER-674</scope>
    <scope>SUBCELLULAR LOCATION</scope>
</reference>
<protein>
    <recommendedName>
        <fullName evidence="7">Cilia- and flagella-associated protein 58</fullName>
    </recommendedName>
    <alternativeName>
        <fullName evidence="6">Coiled-coil domain-containing protein 147</fullName>
    </alternativeName>
</protein>
<proteinExistence type="evidence at protein level"/>
<dbReference type="EMBL" id="AL162742">
    <property type="status" value="NOT_ANNOTATED_CDS"/>
    <property type="molecule type" value="Genomic_DNA"/>
</dbReference>
<dbReference type="EMBL" id="AL355378">
    <property type="status" value="NOT_ANNOTATED_CDS"/>
    <property type="molecule type" value="Genomic_DNA"/>
</dbReference>
<dbReference type="EMBL" id="CH471066">
    <property type="protein sequence ID" value="EAW49595.1"/>
    <property type="molecule type" value="Genomic_DNA"/>
</dbReference>
<dbReference type="EMBL" id="BC036225">
    <property type="protein sequence ID" value="AAH36225.1"/>
    <property type="molecule type" value="mRNA"/>
</dbReference>
<dbReference type="EMBL" id="BC109126">
    <property type="protein sequence ID" value="AAI09127.1"/>
    <property type="molecule type" value="mRNA"/>
</dbReference>
<dbReference type="EMBL" id="AK093227">
    <property type="protein sequence ID" value="BAC04102.1"/>
    <property type="molecule type" value="mRNA"/>
</dbReference>
<dbReference type="CCDS" id="CCDS31282.1"/>
<dbReference type="RefSeq" id="NP_001008723.1">
    <property type="nucleotide sequence ID" value="NM_001008723.2"/>
</dbReference>
<dbReference type="PDB" id="8J07">
    <property type="method" value="EM"/>
    <property type="resolution" value="4.10 A"/>
    <property type="chains" value="j1/j2=1-872"/>
</dbReference>
<dbReference type="PDBsum" id="8J07"/>
<dbReference type="EMDB" id="EMD-35888"/>
<dbReference type="SMR" id="Q5T655"/>
<dbReference type="BioGRID" id="127743">
    <property type="interactions" value="17"/>
</dbReference>
<dbReference type="FunCoup" id="Q5T655">
    <property type="interactions" value="27"/>
</dbReference>
<dbReference type="IntAct" id="Q5T655">
    <property type="interactions" value="7"/>
</dbReference>
<dbReference type="STRING" id="9606.ENSP00000358718"/>
<dbReference type="GlyGen" id="Q5T655">
    <property type="glycosylation" value="1 site, 1 O-linked glycan (1 site)"/>
</dbReference>
<dbReference type="iPTMnet" id="Q5T655"/>
<dbReference type="PhosphoSitePlus" id="Q5T655"/>
<dbReference type="BioMuta" id="CFAP58"/>
<dbReference type="DMDM" id="74745166"/>
<dbReference type="jPOST" id="Q5T655"/>
<dbReference type="MassIVE" id="Q5T655"/>
<dbReference type="PaxDb" id="9606-ENSP00000358718"/>
<dbReference type="PeptideAtlas" id="Q5T655"/>
<dbReference type="ProteomicsDB" id="64567"/>
<dbReference type="Antibodypedia" id="48984">
    <property type="antibodies" value="101 antibodies from 15 providers"/>
</dbReference>
<dbReference type="DNASU" id="159686"/>
<dbReference type="Ensembl" id="ENST00000369704.8">
    <property type="protein sequence ID" value="ENSP00000358718.3"/>
    <property type="gene ID" value="ENSG00000120051.15"/>
</dbReference>
<dbReference type="GeneID" id="159686"/>
<dbReference type="KEGG" id="hsa:159686"/>
<dbReference type="MANE-Select" id="ENST00000369704.8">
    <property type="protein sequence ID" value="ENSP00000358718.3"/>
    <property type="RefSeq nucleotide sequence ID" value="NM_001008723.2"/>
    <property type="RefSeq protein sequence ID" value="NP_001008723.1"/>
</dbReference>
<dbReference type="UCSC" id="uc001kyh.3">
    <property type="organism name" value="human"/>
</dbReference>
<dbReference type="AGR" id="HGNC:26676"/>
<dbReference type="CTD" id="159686"/>
<dbReference type="DisGeNET" id="159686"/>
<dbReference type="GeneCards" id="CFAP58"/>
<dbReference type="HGNC" id="HGNC:26676">
    <property type="gene designation" value="CFAP58"/>
</dbReference>
<dbReference type="HPA" id="ENSG00000120051">
    <property type="expression patterns" value="Tissue enhanced (fallopian tube, testis)"/>
</dbReference>
<dbReference type="MalaCards" id="CFAP58"/>
<dbReference type="MIM" id="619129">
    <property type="type" value="gene"/>
</dbReference>
<dbReference type="MIM" id="619144">
    <property type="type" value="phenotype"/>
</dbReference>
<dbReference type="neXtProt" id="NX_Q5T655"/>
<dbReference type="OpenTargets" id="ENSG00000120051"/>
<dbReference type="PharmGKB" id="PA162381518"/>
<dbReference type="VEuPathDB" id="HostDB:ENSG00000120051"/>
<dbReference type="eggNOG" id="ENOG502QPV7">
    <property type="taxonomic scope" value="Eukaryota"/>
</dbReference>
<dbReference type="GeneTree" id="ENSGT00530000063534"/>
<dbReference type="HOGENOM" id="CLU_006364_0_0_1"/>
<dbReference type="InParanoid" id="Q5T655"/>
<dbReference type="OMA" id="CQDDMRL"/>
<dbReference type="OrthoDB" id="264785at2759"/>
<dbReference type="PAN-GO" id="Q5T655">
    <property type="GO annotations" value="1 GO annotation based on evolutionary models"/>
</dbReference>
<dbReference type="PhylomeDB" id="Q5T655"/>
<dbReference type="TreeFam" id="TF328680"/>
<dbReference type="PathwayCommons" id="Q5T655"/>
<dbReference type="SignaLink" id="Q5T655"/>
<dbReference type="BioGRID-ORCS" id="159686">
    <property type="hits" value="11 hits in 1150 CRISPR screens"/>
</dbReference>
<dbReference type="ChiTaRS" id="CFAP58">
    <property type="organism name" value="human"/>
</dbReference>
<dbReference type="GenomeRNAi" id="159686"/>
<dbReference type="Pharos" id="Q5T655">
    <property type="development level" value="Tdark"/>
</dbReference>
<dbReference type="PRO" id="PR:Q5T655"/>
<dbReference type="Proteomes" id="UP000005640">
    <property type="component" value="Chromosome 10"/>
</dbReference>
<dbReference type="RNAct" id="Q5T655">
    <property type="molecule type" value="protein"/>
</dbReference>
<dbReference type="Bgee" id="ENSG00000120051">
    <property type="expression patterns" value="Expressed in oocyte and 107 other cell types or tissues"/>
</dbReference>
<dbReference type="ExpressionAtlas" id="Q5T655">
    <property type="expression patterns" value="baseline and differential"/>
</dbReference>
<dbReference type="GO" id="GO:0005813">
    <property type="term" value="C:centrosome"/>
    <property type="evidence" value="ECO:0000250"/>
    <property type="project" value="UniProtKB"/>
</dbReference>
<dbReference type="GO" id="GO:0005737">
    <property type="term" value="C:cytoplasm"/>
    <property type="evidence" value="ECO:0007669"/>
    <property type="project" value="UniProtKB-KW"/>
</dbReference>
<dbReference type="GO" id="GO:0005856">
    <property type="term" value="C:cytoskeleton"/>
    <property type="evidence" value="ECO:0000318"/>
    <property type="project" value="GO_Central"/>
</dbReference>
<dbReference type="GO" id="GO:0005615">
    <property type="term" value="C:extracellular space"/>
    <property type="evidence" value="ECO:0007005"/>
    <property type="project" value="UniProtKB"/>
</dbReference>
<dbReference type="GO" id="GO:0036126">
    <property type="term" value="C:sperm flagellum"/>
    <property type="evidence" value="ECO:0000314"/>
    <property type="project" value="UniProtKB"/>
</dbReference>
<dbReference type="GO" id="GO:0097225">
    <property type="term" value="C:sperm midpiece"/>
    <property type="evidence" value="ECO:0000315"/>
    <property type="project" value="GO_Central"/>
</dbReference>
<dbReference type="GO" id="GO:0060271">
    <property type="term" value="P:cilium assembly"/>
    <property type="evidence" value="ECO:0000250"/>
    <property type="project" value="UniProtKB"/>
</dbReference>
<dbReference type="GO" id="GO:0030317">
    <property type="term" value="P:flagellated sperm motility"/>
    <property type="evidence" value="ECO:0000315"/>
    <property type="project" value="GO_Central"/>
</dbReference>
<dbReference type="GO" id="GO:0007219">
    <property type="term" value="P:Notch signaling pathway"/>
    <property type="evidence" value="ECO:0000250"/>
    <property type="project" value="UniProtKB"/>
</dbReference>
<dbReference type="GO" id="GO:0120229">
    <property type="term" value="P:protein localization to motile cilium"/>
    <property type="evidence" value="ECO:0000315"/>
    <property type="project" value="GO_Central"/>
</dbReference>
<dbReference type="GO" id="GO:0007288">
    <property type="term" value="P:sperm axoneme assembly"/>
    <property type="evidence" value="ECO:0000315"/>
    <property type="project" value="GO_Central"/>
</dbReference>
<dbReference type="GO" id="GO:0120316">
    <property type="term" value="P:sperm flagellum assembly"/>
    <property type="evidence" value="ECO:0000250"/>
    <property type="project" value="UniProtKB"/>
</dbReference>
<dbReference type="GO" id="GO:0120317">
    <property type="term" value="P:sperm mitochondrial sheath assembly"/>
    <property type="evidence" value="ECO:0000315"/>
    <property type="project" value="GO_Central"/>
</dbReference>
<dbReference type="InterPro" id="IPR049270">
    <property type="entry name" value="CFAP58_CC"/>
</dbReference>
<dbReference type="PANTHER" id="PTHR32083">
    <property type="entry name" value="CILIA AND FLAGELLA-ASSOCIATED PROTEIN 58-RELATED"/>
    <property type="match status" value="1"/>
</dbReference>
<dbReference type="PANTHER" id="PTHR32083:SF31">
    <property type="entry name" value="CILIA- AND FLAGELLA-ASSOCIATED PROTEIN 58"/>
    <property type="match status" value="1"/>
</dbReference>
<dbReference type="Pfam" id="PF21771">
    <property type="entry name" value="CFAP58_CC"/>
    <property type="match status" value="1"/>
</dbReference>
<evidence type="ECO:0000250" key="1">
    <source>
        <dbReference type="UniProtKB" id="A8HUA1"/>
    </source>
</evidence>
<evidence type="ECO:0000250" key="2">
    <source>
        <dbReference type="UniProtKB" id="B2RW38"/>
    </source>
</evidence>
<evidence type="ECO:0000255" key="3"/>
<evidence type="ECO:0000269" key="4">
    <source>
    </source>
</evidence>
<evidence type="ECO:0000269" key="5">
    <source>
    </source>
</evidence>
<evidence type="ECO:0000305" key="6"/>
<evidence type="ECO:0000312" key="7">
    <source>
        <dbReference type="HGNC" id="HGNC:26676"/>
    </source>
</evidence>
<organism>
    <name type="scientific">Homo sapiens</name>
    <name type="common">Human</name>
    <dbReference type="NCBI Taxonomy" id="9606"/>
    <lineage>
        <taxon>Eukaryota</taxon>
        <taxon>Metazoa</taxon>
        <taxon>Chordata</taxon>
        <taxon>Craniata</taxon>
        <taxon>Vertebrata</taxon>
        <taxon>Euteleostomi</taxon>
        <taxon>Mammalia</taxon>
        <taxon>Eutheria</taxon>
        <taxon>Euarchontoglires</taxon>
        <taxon>Primates</taxon>
        <taxon>Haplorrhini</taxon>
        <taxon>Catarrhini</taxon>
        <taxon>Hominidae</taxon>
        <taxon>Homo</taxon>
    </lineage>
</organism>
<sequence>MAEEKGGKQVLEESAFEEMERDFQGVLHELSGDKSLEKFRIEYERLHAVMKKSYDNEKRLMAKCRELNAEIVVNSAKVATALKLSQDDQTTIASLKKEIEKAWKMVDSAYDKEQKAKETILALKEEIVNLTKLVEQGSGLSMDQHSNIRDLLRFKEEVTKERDQLLSEVVKLRESLAQTTEQQQETERSKEEAEHAISQFQQEIQQRQNEASREFRKKEKLEKELKQIQADMDSRQTEIKALQQYVQKSKEELQKLEQQLKEQKILNERAAKELEQFQMRNAKLQQENEQHSLVCEQLSQENQQKALELKAKEEEVHQMRLDIGKLNKIREQIHKKLHHTEDQKAEVEQHKETLKNQIVGLEREVEASKKQAELDRKAMDELLRERDILNKNMLKAVNATQKQTDLVKLHEQAKRNLEGEIQNYKDEAQKQRKIIFHLEKERDRYINQASDLTQKVLMNMEDIKVRETQIFDYRKKIAESEIKLKQQQNLYEAVRSDRNLYSKNLVEAQDEITDMKRKLKIMIHQVDELKEDISAKESALVKLHLEQQRIEKEKETLKAELQKLRQQALETKHFIEKQEAEERKLLRIIAEADGERLRQKKELDQVISERDILGSQLVRRNDELALLYEKIKIQQSVLNKGESQYNQRLEDMRILRLEIKKLRREKGILARSMANVEELRQEFFHMQRELLKERTRCRALEEELENPLNVHRWRKLEASDPNAYELIQKIHTLQKRLISKTEEVVEKELLLQEKEKLYMELKHVLARQPGPEAAEQLKLYRRTLHDKKQQLKVLSSELNMYEVQSKEYKYEVEKLTNELQNLKKKYLAQKRKEQLQKNKDTAPMDNTFLMVKPNGPGFTGGGFPLRSTKMTF</sequence>
<feature type="chain" id="PRO_0000274317" description="Cilia- and flagella-associated protein 58">
    <location>
        <begin position="1"/>
        <end position="872"/>
    </location>
</feature>
<feature type="coiled-coil region" evidence="3">
    <location>
        <begin position="106"/>
        <end position="595"/>
    </location>
</feature>
<feature type="coiled-coil region" evidence="3">
    <location>
        <begin position="642"/>
        <end position="839"/>
    </location>
</feature>
<feature type="sequence variant" id="VAR_085546" description="In SPGF49; uncertain significance." evidence="5">
    <original>S</original>
    <variation>L</variation>
    <location>
        <position position="108"/>
    </location>
</feature>
<feature type="sequence variant" id="VAR_030255" description="In dbSNP:rs11192036.">
    <original>S</original>
    <variation>T</variation>
    <location>
        <position position="496"/>
    </location>
</feature>
<feature type="sequence variant" id="VAR_085209" description="In SPGF49." evidence="4">
    <location>
        <begin position="566"/>
        <end position="872"/>
    </location>
</feature>
<feature type="sequence variant" id="VAR_085547" description="In SPGF49; uncertain significance; dbSNP:rs377507907." evidence="5">
    <original>R</original>
    <variation>W</variation>
    <location>
        <position position="619"/>
    </location>
</feature>
<feature type="sequence variant" id="VAR_085548" description="In SPGF49; uncertain significance; dbSNP:rs1398039668." evidence="5">
    <original>Y</original>
    <variation>C</variation>
    <location>
        <position position="628"/>
    </location>
</feature>
<feature type="sequence variant" id="VAR_085549" description="In SPGF49; uncertain significance." evidence="5">
    <original>A</original>
    <variation>S</variation>
    <location>
        <position position="674"/>
    </location>
</feature>
<feature type="sequence variant" id="VAR_085210" description="In SPGF49; results in loss of mutant protein; results in axonemal abnormalities." evidence="4">
    <location>
        <begin position="698"/>
        <end position="872"/>
    </location>
</feature>
<feature type="sequence variant" id="VAR_085211" description="In SPGF49; results in loss of mutant protein; results in axonemal abnormalities." evidence="4">
    <location>
        <begin position="758"/>
        <end position="872"/>
    </location>
</feature>
<feature type="sequence variant" id="VAR_030256" description="In dbSNP:rs7087328.">
    <original>Q</original>
    <variation>H</variation>
    <location>
        <position position="804"/>
    </location>
</feature>
<keyword id="KW-0002">3D-structure</keyword>
<keyword id="KW-0966">Cell projection</keyword>
<keyword id="KW-0969">Cilium</keyword>
<keyword id="KW-0970">Cilium biogenesis/degradation</keyword>
<keyword id="KW-0175">Coiled coil</keyword>
<keyword id="KW-0963">Cytoplasm</keyword>
<keyword id="KW-0206">Cytoskeleton</keyword>
<keyword id="KW-0225">Disease variant</keyword>
<keyword id="KW-0282">Flagellum</keyword>
<keyword id="KW-1267">Proteomics identification</keyword>
<keyword id="KW-1185">Reference proteome</keyword>
<accession>Q5T655</accession>
<accession>D3DRA6</accession>
<accession>Q8NA27</accession>
<name>CFA58_HUMAN</name>
<gene>
    <name evidence="7" type="primary">CFAP58</name>
    <name evidence="7" type="synonym">C10orf80</name>
    <name evidence="7" type="synonym">CCDC147</name>
</gene>